<accession>M1LL58</accession>
<sequence>MVDAITVLTAICITVLMLLMVISGTAMIVKELNPNDIFTMQSLKFNRTVTIFKYIGLFIYIPGTIILYATYVKSLLMKN</sequence>
<organismHost>
    <name type="scientific">Cynomys gunnisoni</name>
    <name type="common">Gunnison's prairie dog</name>
    <name type="synonym">Spermophilus gunnisoni</name>
    <dbReference type="NCBI Taxonomy" id="45479"/>
</organismHost>
<organismHost>
    <name type="scientific">Cynomys leucurus</name>
    <name type="common">White-tailed prairie dog</name>
    <dbReference type="NCBI Taxonomy" id="99825"/>
</organismHost>
<organismHost>
    <name type="scientific">Cynomys ludovicianus</name>
    <name type="common">Black-tailed prairie dog</name>
    <dbReference type="NCBI Taxonomy" id="45480"/>
</organismHost>
<organismHost>
    <name type="scientific">Cynomys mexicanus</name>
    <name type="common">Mexican prairie dog</name>
    <dbReference type="NCBI Taxonomy" id="99826"/>
</organismHost>
<organismHost>
    <name type="scientific">Cynomys parvidens</name>
    <name type="common">Utah prairie dog</name>
    <dbReference type="NCBI Taxonomy" id="99827"/>
</organismHost>
<organismHost>
    <name type="scientific">Gliridae</name>
    <name type="common">dormice</name>
    <dbReference type="NCBI Taxonomy" id="30650"/>
</organismHost>
<organismHost>
    <name type="scientific">Heliosciurus ruwenzorii</name>
    <name type="common">Ruwenzori sun squirrel</name>
    <dbReference type="NCBI Taxonomy" id="226685"/>
</organismHost>
<organismHost>
    <name type="scientific">Homo sapiens</name>
    <name type="common">Human</name>
    <dbReference type="NCBI Taxonomy" id="9606"/>
</organismHost>
<organismHost>
    <name type="scientific">Mus musculus</name>
    <name type="common">Mouse</name>
    <dbReference type="NCBI Taxonomy" id="10090"/>
</organismHost>
<evidence type="ECO:0000250" key="1">
    <source>
        <dbReference type="UniProtKB" id="P12924"/>
    </source>
</evidence>
<evidence type="ECO:0000255" key="2"/>
<evidence type="ECO:0000305" key="3"/>
<organism>
    <name type="scientific">Monkeypox virus</name>
    <dbReference type="NCBI Taxonomy" id="10244"/>
    <lineage>
        <taxon>Viruses</taxon>
        <taxon>Varidnaviria</taxon>
        <taxon>Bamfordvirae</taxon>
        <taxon>Nucleocytoviricota</taxon>
        <taxon>Pokkesviricetes</taxon>
        <taxon>Chitovirales</taxon>
        <taxon>Poxviridae</taxon>
        <taxon>Chordopoxvirinae</taxon>
        <taxon>Orthopoxvirus</taxon>
    </lineage>
</organism>
<gene>
    <name type="primary">OPG081</name>
    <name type="ORF">MPXVgp066</name>
</gene>
<reference key="1">
    <citation type="journal article" date="2013" name="Am. J. Trop. Med. Hyg.">
        <title>Detection of human monkeypox in the republic of the congo following intensive community education.</title>
        <authorList>
            <person name="Reynolds M.G."/>
            <person name="Emerson G.L."/>
            <person name="Pukuta E."/>
            <person name="Karhemere S."/>
            <person name="Muyembe J.J."/>
            <person name="Bikindou A."/>
            <person name="McCollum A.M."/>
            <person name="Moses C."/>
            <person name="Wilkins K."/>
            <person name="Zhao H."/>
            <person name="Damon I.K."/>
            <person name="Karem K.L."/>
            <person name="Li Y."/>
            <person name="Carroll D.S."/>
            <person name="Mombouli J.V."/>
        </authorList>
    </citation>
    <scope>NUCLEOTIDE SEQUENCE</scope>
    <source>
        <strain>ROC2010</strain>
    </source>
</reference>
<reference key="2">
    <citation type="journal article" date="2022" name="J. Infect. Dis.">
        <title>Exportation of Monkeypox virus from the African continent.</title>
        <authorList>
            <person name="Mauldin M.R."/>
            <person name="McCollum A.M."/>
            <person name="Nakazawa Y.J."/>
            <person name="Mandra A."/>
            <person name="Whitehouse E.R."/>
            <person name="Davidson W."/>
            <person name="Zhao H."/>
            <person name="Gao J."/>
            <person name="Li Y."/>
            <person name="Doty J."/>
            <person name="Yinka-Ogunleye A."/>
            <person name="Akinpelu A."/>
            <person name="Aruna O."/>
            <person name="Naidoo D."/>
            <person name="Lewandowski K."/>
            <person name="Afrough B."/>
            <person name="Graham V."/>
            <person name="Aarons E."/>
            <person name="Hewson R."/>
            <person name="Vipond R."/>
            <person name="Dunning J."/>
            <person name="Chand M."/>
            <person name="Brown C."/>
            <person name="Cohen-Gihon I."/>
            <person name="Erez N."/>
            <person name="Shifman O."/>
            <person name="Israeli O."/>
            <person name="Sharon M."/>
            <person name="Schwartz E."/>
            <person name="Beth-Din A."/>
            <person name="Zvi A."/>
            <person name="Mak T.M."/>
            <person name="Ng Y.K."/>
            <person name="Cui L."/>
            <person name="Lin R.T.P."/>
            <person name="Olson V.A."/>
            <person name="Brooks T."/>
            <person name="Paran N."/>
            <person name="Ihekweazu C."/>
            <person name="Reynolds M.G."/>
        </authorList>
    </citation>
    <scope>NUCLEOTIDE SEQUENCE [LARGE SCALE GENOMIC DNA]</scope>
    <source>
        <strain>MPXV-M5312_HM12_Rivers</strain>
    </source>
</reference>
<name>PG081_MONPV</name>
<feature type="chain" id="PRO_0000457797" description="Protein OPG081">
    <location>
        <begin position="1"/>
        <end position="79"/>
    </location>
</feature>
<feature type="topological domain" description="Intravirion" evidence="2">
    <location>
        <begin position="2"/>
        <end position="8"/>
    </location>
</feature>
<feature type="transmembrane region" description="Helical" evidence="2">
    <location>
        <begin position="9"/>
        <end position="29"/>
    </location>
</feature>
<feature type="topological domain" description="Virion surface" evidence="2">
    <location>
        <begin position="30"/>
        <end position="47"/>
    </location>
</feature>
<feature type="transmembrane region" description="Helical" evidence="2">
    <location>
        <begin position="48"/>
        <end position="68"/>
    </location>
</feature>
<feature type="topological domain" description="Intravirion" evidence="2">
    <location>
        <begin position="69"/>
        <end position="79"/>
    </location>
</feature>
<comment type="function">
    <text evidence="1">Envelope protein.</text>
</comment>
<comment type="subcellular location">
    <subcellularLocation>
        <location evidence="1">Virion membrane</location>
        <topology evidence="1">Multi-pass membrane protein</topology>
    </subcellularLocation>
    <text evidence="1">Probably localizes to the membrane of mature virions (MV).</text>
</comment>
<comment type="induction">
    <text evidence="1">Expressed in the intermediate phase of the viral replicative cycle.</text>
</comment>
<comment type="similarity">
    <text evidence="3">Belongs to the orthopoxvirus OPG081 family.</text>
</comment>
<keyword id="KW-0426">Late protein</keyword>
<keyword id="KW-0472">Membrane</keyword>
<keyword id="KW-1185">Reference proteome</keyword>
<keyword id="KW-0812">Transmembrane</keyword>
<keyword id="KW-1133">Transmembrane helix</keyword>
<keyword id="KW-0261">Viral envelope protein</keyword>
<keyword id="KW-0946">Virion</keyword>
<proteinExistence type="inferred from homology"/>
<protein>
    <recommendedName>
        <fullName>Protein OPG081</fullName>
    </recommendedName>
</protein>
<dbReference type="EMBL" id="KC257461">
    <property type="protein sequence ID" value="AGF36970.1"/>
    <property type="molecule type" value="Genomic_DNA"/>
</dbReference>
<dbReference type="EMBL" id="MT903340">
    <property type="protein sequence ID" value="QNP12936.1"/>
    <property type="molecule type" value="Genomic_DNA"/>
</dbReference>
<dbReference type="RefSeq" id="NP_536493.1">
    <property type="nucleotide sequence ID" value="NC_003310.1"/>
</dbReference>
<dbReference type="RefSeq" id="YP_010377063.1">
    <property type="nucleotide sequence ID" value="NC_063383.1"/>
</dbReference>
<dbReference type="GeneID" id="72551476"/>
<dbReference type="GeneID" id="929054"/>
<dbReference type="KEGG" id="vg:929054"/>
<dbReference type="Proteomes" id="UP000516359">
    <property type="component" value="Genome"/>
</dbReference>
<dbReference type="GO" id="GO:0016020">
    <property type="term" value="C:membrane"/>
    <property type="evidence" value="ECO:0007669"/>
    <property type="project" value="UniProtKB-KW"/>
</dbReference>
<dbReference type="GO" id="GO:0019031">
    <property type="term" value="C:viral envelope"/>
    <property type="evidence" value="ECO:0007669"/>
    <property type="project" value="UniProtKB-KW"/>
</dbReference>
<dbReference type="GO" id="GO:0055036">
    <property type="term" value="C:virion membrane"/>
    <property type="evidence" value="ECO:0007669"/>
    <property type="project" value="UniProtKB-SubCell"/>
</dbReference>
<dbReference type="InterPro" id="IPR006803">
    <property type="entry name" value="Poxvirus_I5"/>
</dbReference>
<dbReference type="Pfam" id="PF04713">
    <property type="entry name" value="Pox_I5"/>
    <property type="match status" value="1"/>
</dbReference>
<dbReference type="PIRSF" id="PIRSF003768">
    <property type="entry name" value="VAC_I5L"/>
    <property type="match status" value="1"/>
</dbReference>